<proteinExistence type="predicted"/>
<sequence>MNVFMPIRVFLYSYVIINSLLSSFFHQYRPLFIKNGAAFGVSNSEKICVTLIVNELI</sequence>
<keyword id="KW-0472">Membrane</keyword>
<keyword id="KW-1185">Reference proteome</keyword>
<keyword id="KW-0812">Transmembrane</keyword>
<keyword id="KW-1133">Transmembrane helix</keyword>
<accession>Q3E810</accession>
<accession>D6VYY1</accession>
<comment type="subcellular location">
    <subcellularLocation>
        <location evidence="2">Membrane</location>
        <topology evidence="2">Single-pass membrane protein</topology>
    </subcellularLocation>
</comment>
<feature type="chain" id="PRO_0000247211" description="Uncharacterized protein YLR342W-A">
    <location>
        <begin position="1"/>
        <end position="57"/>
    </location>
</feature>
<feature type="transmembrane region" description="Helical" evidence="1">
    <location>
        <begin position="4"/>
        <end position="26"/>
    </location>
</feature>
<organism>
    <name type="scientific">Saccharomyces cerevisiae (strain ATCC 204508 / S288c)</name>
    <name type="common">Baker's yeast</name>
    <dbReference type="NCBI Taxonomy" id="559292"/>
    <lineage>
        <taxon>Eukaryota</taxon>
        <taxon>Fungi</taxon>
        <taxon>Dikarya</taxon>
        <taxon>Ascomycota</taxon>
        <taxon>Saccharomycotina</taxon>
        <taxon>Saccharomycetes</taxon>
        <taxon>Saccharomycetales</taxon>
        <taxon>Saccharomycetaceae</taxon>
        <taxon>Saccharomyces</taxon>
    </lineage>
</organism>
<dbReference type="EMBL" id="U19028">
    <property type="status" value="NOT_ANNOTATED_CDS"/>
    <property type="molecule type" value="Genomic_DNA"/>
</dbReference>
<dbReference type="EMBL" id="BK006945">
    <property type="protein sequence ID" value="DAA09647.1"/>
    <property type="molecule type" value="Genomic_DNA"/>
</dbReference>
<dbReference type="RefSeq" id="NP_878133.1">
    <property type="nucleotide sequence ID" value="NM_001184569.1"/>
</dbReference>
<dbReference type="BioGRID" id="36963">
    <property type="interactions" value="7"/>
</dbReference>
<dbReference type="FunCoup" id="Q3E810">
    <property type="interactions" value="5"/>
</dbReference>
<dbReference type="STRING" id="4932.YLR342W-A"/>
<dbReference type="PaxDb" id="4932-YLR342W-A"/>
<dbReference type="EnsemblFungi" id="YLR342W-A_mRNA">
    <property type="protein sequence ID" value="YLR342W-A"/>
    <property type="gene ID" value="YLR342W-A"/>
</dbReference>
<dbReference type="GeneID" id="1466421"/>
<dbReference type="KEGG" id="sce:YLR342W-A"/>
<dbReference type="AGR" id="SGD:S000028571"/>
<dbReference type="SGD" id="S000028571">
    <property type="gene designation" value="YLR342W-A"/>
</dbReference>
<dbReference type="VEuPathDB" id="FungiDB:YLR342W-A"/>
<dbReference type="HOGENOM" id="CLU_2998234_0_0_1"/>
<dbReference type="InParanoid" id="Q3E810"/>
<dbReference type="OrthoDB" id="10276062at2759"/>
<dbReference type="BioCyc" id="YEAST:G3O-32582-MONOMER"/>
<dbReference type="PRO" id="PR:Q3E810"/>
<dbReference type="Proteomes" id="UP000002311">
    <property type="component" value="Chromosome XII"/>
</dbReference>
<dbReference type="RNAct" id="Q3E810">
    <property type="molecule type" value="protein"/>
</dbReference>
<dbReference type="GO" id="GO:0016020">
    <property type="term" value="C:membrane"/>
    <property type="evidence" value="ECO:0007669"/>
    <property type="project" value="UniProtKB-SubCell"/>
</dbReference>
<gene>
    <name type="ordered locus">YLR342W-A</name>
</gene>
<evidence type="ECO:0000255" key="1"/>
<evidence type="ECO:0000305" key="2"/>
<name>YL342_YEAST</name>
<reference key="1">
    <citation type="journal article" date="1997" name="Nature">
        <title>The nucleotide sequence of Saccharomyces cerevisiae chromosome XII.</title>
        <authorList>
            <person name="Johnston M."/>
            <person name="Hillier L.W."/>
            <person name="Riles L."/>
            <person name="Albermann K."/>
            <person name="Andre B."/>
            <person name="Ansorge W."/>
            <person name="Benes V."/>
            <person name="Brueckner M."/>
            <person name="Delius H."/>
            <person name="Dubois E."/>
            <person name="Duesterhoeft A."/>
            <person name="Entian K.-D."/>
            <person name="Floeth M."/>
            <person name="Goffeau A."/>
            <person name="Hebling U."/>
            <person name="Heumann K."/>
            <person name="Heuss-Neitzel D."/>
            <person name="Hilbert H."/>
            <person name="Hilger F."/>
            <person name="Kleine K."/>
            <person name="Koetter P."/>
            <person name="Louis E.J."/>
            <person name="Messenguy F."/>
            <person name="Mewes H.-W."/>
            <person name="Miosga T."/>
            <person name="Moestl D."/>
            <person name="Mueller-Auer S."/>
            <person name="Nentwich U."/>
            <person name="Obermaier B."/>
            <person name="Piravandi E."/>
            <person name="Pohl T.M."/>
            <person name="Portetelle D."/>
            <person name="Purnelle B."/>
            <person name="Rechmann S."/>
            <person name="Rieger M."/>
            <person name="Rinke M."/>
            <person name="Rose M."/>
            <person name="Scharfe M."/>
            <person name="Scherens B."/>
            <person name="Scholler P."/>
            <person name="Schwager C."/>
            <person name="Schwarz S."/>
            <person name="Underwood A.P."/>
            <person name="Urrestarazu L.A."/>
            <person name="Vandenbol M."/>
            <person name="Verhasselt P."/>
            <person name="Vierendeels F."/>
            <person name="Voet M."/>
            <person name="Volckaert G."/>
            <person name="Voss H."/>
            <person name="Wambutt R."/>
            <person name="Wedler E."/>
            <person name="Wedler H."/>
            <person name="Zimmermann F.K."/>
            <person name="Zollner A."/>
            <person name="Hani J."/>
            <person name="Hoheisel J.D."/>
        </authorList>
    </citation>
    <scope>NUCLEOTIDE SEQUENCE [LARGE SCALE GENOMIC DNA]</scope>
    <source>
        <strain>ATCC 204508 / S288c</strain>
    </source>
</reference>
<reference key="2">
    <citation type="journal article" date="2014" name="G3 (Bethesda)">
        <title>The reference genome sequence of Saccharomyces cerevisiae: Then and now.</title>
        <authorList>
            <person name="Engel S.R."/>
            <person name="Dietrich F.S."/>
            <person name="Fisk D.G."/>
            <person name="Binkley G."/>
            <person name="Balakrishnan R."/>
            <person name="Costanzo M.C."/>
            <person name="Dwight S.S."/>
            <person name="Hitz B.C."/>
            <person name="Karra K."/>
            <person name="Nash R.S."/>
            <person name="Weng S."/>
            <person name="Wong E.D."/>
            <person name="Lloyd P."/>
            <person name="Skrzypek M.S."/>
            <person name="Miyasato S.R."/>
            <person name="Simison M."/>
            <person name="Cherry J.M."/>
        </authorList>
    </citation>
    <scope>GENOME REANNOTATION</scope>
    <source>
        <strain>ATCC 204508 / S288c</strain>
    </source>
</reference>
<reference key="3">
    <citation type="journal article" date="2003" name="Genome Res.">
        <title>Systematic discovery of new genes in the Saccharomyces cerevisiae genome.</title>
        <authorList>
            <person name="Kessler M.M."/>
            <person name="Zeng Q."/>
            <person name="Hogan S."/>
            <person name="Cook R."/>
            <person name="Morales A.J."/>
            <person name="Cottarel G."/>
        </authorList>
    </citation>
    <scope>GENOME REANNOTATION</scope>
</reference>
<protein>
    <recommendedName>
        <fullName>Uncharacterized protein YLR342W-A</fullName>
    </recommendedName>
</protein>